<name>SEPF_STAAE</name>
<reference key="1">
    <citation type="journal article" date="2008" name="J. Bacteriol.">
        <title>Genome sequence of Staphylococcus aureus strain Newman and comparative analysis of staphylococcal genomes: polymorphism and evolution of two major pathogenicity islands.</title>
        <authorList>
            <person name="Baba T."/>
            <person name="Bae T."/>
            <person name="Schneewind O."/>
            <person name="Takeuchi F."/>
            <person name="Hiramatsu K."/>
        </authorList>
    </citation>
    <scope>NUCLEOTIDE SEQUENCE [LARGE SCALE GENOMIC DNA]</scope>
    <source>
        <strain>Newman</strain>
    </source>
</reference>
<sequence length="187" mass="21023">MSHLALKDLFSGFFVIDDEEEVEVPDKQQQVNEAPAKEQSQQTTKQNAIKSVPQKSASRYTTTSEERNNRMSNYSKNNSRNVVTMNNATPNNASQESSKMCLFEPRVFSDTQDIADELKNRRATLVNLQRIDKVSAKRIIDFLSGTVYAIGGDIQRVGTDIFLCTPDNVEVAGSITDHIENMEHSFD</sequence>
<keyword id="KW-0131">Cell cycle</keyword>
<keyword id="KW-0132">Cell division</keyword>
<keyword id="KW-0963">Cytoplasm</keyword>
<keyword id="KW-0717">Septation</keyword>
<evidence type="ECO:0000255" key="1">
    <source>
        <dbReference type="HAMAP-Rule" id="MF_01197"/>
    </source>
</evidence>
<evidence type="ECO:0000256" key="2">
    <source>
        <dbReference type="SAM" id="MobiDB-lite"/>
    </source>
</evidence>
<gene>
    <name evidence="1" type="primary">sepF</name>
    <name type="ordered locus">NWMN_1099</name>
</gene>
<proteinExistence type="inferred from homology"/>
<protein>
    <recommendedName>
        <fullName evidence="1">Cell division protein SepF</fullName>
    </recommendedName>
</protein>
<comment type="function">
    <text evidence="1">Cell division protein that is part of the divisome complex and is recruited early to the Z-ring. Probably stimulates Z-ring formation, perhaps through the cross-linking of FtsZ protofilaments. Its function overlaps with FtsA.</text>
</comment>
<comment type="subunit">
    <text evidence="1">Homodimer. Interacts with FtsZ.</text>
</comment>
<comment type="subcellular location">
    <subcellularLocation>
        <location evidence="1">Cytoplasm</location>
    </subcellularLocation>
    <text evidence="1">Localizes to the division site, in a FtsZ-dependent manner.</text>
</comment>
<comment type="similarity">
    <text evidence="1">Belongs to the SepF family.</text>
</comment>
<dbReference type="EMBL" id="AP009351">
    <property type="protein sequence ID" value="BAF67371.1"/>
    <property type="molecule type" value="Genomic_DNA"/>
</dbReference>
<dbReference type="RefSeq" id="WP_000018608.1">
    <property type="nucleotide sequence ID" value="NZ_JBBIAE010000001.1"/>
</dbReference>
<dbReference type="SMR" id="A6QG89"/>
<dbReference type="KEGG" id="sae:NWMN_1099"/>
<dbReference type="HOGENOM" id="CLU_078499_4_1_9"/>
<dbReference type="Proteomes" id="UP000006386">
    <property type="component" value="Chromosome"/>
</dbReference>
<dbReference type="GO" id="GO:0005737">
    <property type="term" value="C:cytoplasm"/>
    <property type="evidence" value="ECO:0007669"/>
    <property type="project" value="UniProtKB-SubCell"/>
</dbReference>
<dbReference type="GO" id="GO:0000917">
    <property type="term" value="P:division septum assembly"/>
    <property type="evidence" value="ECO:0007669"/>
    <property type="project" value="UniProtKB-KW"/>
</dbReference>
<dbReference type="GO" id="GO:0043093">
    <property type="term" value="P:FtsZ-dependent cytokinesis"/>
    <property type="evidence" value="ECO:0007669"/>
    <property type="project" value="UniProtKB-UniRule"/>
</dbReference>
<dbReference type="Gene3D" id="3.30.110.150">
    <property type="entry name" value="SepF-like protein"/>
    <property type="match status" value="1"/>
</dbReference>
<dbReference type="HAMAP" id="MF_01197">
    <property type="entry name" value="SepF"/>
    <property type="match status" value="1"/>
</dbReference>
<dbReference type="InterPro" id="IPR023052">
    <property type="entry name" value="Cell_div_SepF"/>
</dbReference>
<dbReference type="InterPro" id="IPR007561">
    <property type="entry name" value="Cell_div_SepF/SepF-rel"/>
</dbReference>
<dbReference type="InterPro" id="IPR038594">
    <property type="entry name" value="SepF-like_sf"/>
</dbReference>
<dbReference type="PANTHER" id="PTHR35798">
    <property type="entry name" value="CELL DIVISION PROTEIN SEPF"/>
    <property type="match status" value="1"/>
</dbReference>
<dbReference type="PANTHER" id="PTHR35798:SF1">
    <property type="entry name" value="CELL DIVISION PROTEIN SEPF"/>
    <property type="match status" value="1"/>
</dbReference>
<dbReference type="Pfam" id="PF04472">
    <property type="entry name" value="SepF"/>
    <property type="match status" value="1"/>
</dbReference>
<feature type="chain" id="PRO_0000334085" description="Cell division protein SepF">
    <location>
        <begin position="1"/>
        <end position="187"/>
    </location>
</feature>
<feature type="region of interest" description="Disordered" evidence="2">
    <location>
        <begin position="21"/>
        <end position="97"/>
    </location>
</feature>
<feature type="compositionally biased region" description="Polar residues" evidence="2">
    <location>
        <begin position="38"/>
        <end position="63"/>
    </location>
</feature>
<feature type="compositionally biased region" description="Polar residues" evidence="2">
    <location>
        <begin position="70"/>
        <end position="97"/>
    </location>
</feature>
<organism>
    <name type="scientific">Staphylococcus aureus (strain Newman)</name>
    <dbReference type="NCBI Taxonomy" id="426430"/>
    <lineage>
        <taxon>Bacteria</taxon>
        <taxon>Bacillati</taxon>
        <taxon>Bacillota</taxon>
        <taxon>Bacilli</taxon>
        <taxon>Bacillales</taxon>
        <taxon>Staphylococcaceae</taxon>
        <taxon>Staphylococcus</taxon>
    </lineage>
</organism>
<accession>A6QG89</accession>